<organism>
    <name type="scientific">Buchnera aphidicola subsp. Schizaphis graminum (strain Sg)</name>
    <dbReference type="NCBI Taxonomy" id="198804"/>
    <lineage>
        <taxon>Bacteria</taxon>
        <taxon>Pseudomonadati</taxon>
        <taxon>Pseudomonadota</taxon>
        <taxon>Gammaproteobacteria</taxon>
        <taxon>Enterobacterales</taxon>
        <taxon>Erwiniaceae</taxon>
        <taxon>Buchnera</taxon>
    </lineage>
</organism>
<accession>Q8KA07</accession>
<feature type="chain" id="PRO_0000072896" description="Glycine--tRNA ligase beta subunit">
    <location>
        <begin position="1"/>
        <end position="691"/>
    </location>
</feature>
<gene>
    <name evidence="1" type="primary">glyS</name>
    <name type="ordered locus">BUsg_127</name>
</gene>
<dbReference type="EC" id="6.1.1.14" evidence="1"/>
<dbReference type="EMBL" id="AE013218">
    <property type="protein sequence ID" value="AAM67695.1"/>
    <property type="molecule type" value="Genomic_DNA"/>
</dbReference>
<dbReference type="RefSeq" id="WP_044006080.1">
    <property type="nucleotide sequence ID" value="NC_004061.1"/>
</dbReference>
<dbReference type="SMR" id="Q8KA07"/>
<dbReference type="STRING" id="198804.BUsg_127"/>
<dbReference type="GeneID" id="93003597"/>
<dbReference type="KEGG" id="bas:BUsg_127"/>
<dbReference type="eggNOG" id="COG0751">
    <property type="taxonomic scope" value="Bacteria"/>
</dbReference>
<dbReference type="HOGENOM" id="CLU_007220_2_2_6"/>
<dbReference type="Proteomes" id="UP000000416">
    <property type="component" value="Chromosome"/>
</dbReference>
<dbReference type="GO" id="GO:0005829">
    <property type="term" value="C:cytosol"/>
    <property type="evidence" value="ECO:0007669"/>
    <property type="project" value="TreeGrafter"/>
</dbReference>
<dbReference type="GO" id="GO:0004814">
    <property type="term" value="F:arginine-tRNA ligase activity"/>
    <property type="evidence" value="ECO:0007669"/>
    <property type="project" value="InterPro"/>
</dbReference>
<dbReference type="GO" id="GO:0005524">
    <property type="term" value="F:ATP binding"/>
    <property type="evidence" value="ECO:0007669"/>
    <property type="project" value="UniProtKB-UniRule"/>
</dbReference>
<dbReference type="GO" id="GO:0004820">
    <property type="term" value="F:glycine-tRNA ligase activity"/>
    <property type="evidence" value="ECO:0007669"/>
    <property type="project" value="UniProtKB-UniRule"/>
</dbReference>
<dbReference type="GO" id="GO:0006420">
    <property type="term" value="P:arginyl-tRNA aminoacylation"/>
    <property type="evidence" value="ECO:0007669"/>
    <property type="project" value="InterPro"/>
</dbReference>
<dbReference type="GO" id="GO:0006426">
    <property type="term" value="P:glycyl-tRNA aminoacylation"/>
    <property type="evidence" value="ECO:0007669"/>
    <property type="project" value="UniProtKB-UniRule"/>
</dbReference>
<dbReference type="HAMAP" id="MF_00255">
    <property type="entry name" value="Gly_tRNA_synth_beta"/>
    <property type="match status" value="1"/>
</dbReference>
<dbReference type="InterPro" id="IPR008909">
    <property type="entry name" value="DALR_anticod-bd"/>
</dbReference>
<dbReference type="InterPro" id="IPR015944">
    <property type="entry name" value="Gly-tRNA-synth_bsu"/>
</dbReference>
<dbReference type="InterPro" id="IPR006194">
    <property type="entry name" value="Gly-tRNA-synth_heterodimer"/>
</dbReference>
<dbReference type="NCBIfam" id="TIGR00211">
    <property type="entry name" value="glyS"/>
    <property type="match status" value="1"/>
</dbReference>
<dbReference type="PANTHER" id="PTHR30075:SF2">
    <property type="entry name" value="GLYCINE--TRNA LIGASE, CHLOROPLASTIC_MITOCHONDRIAL 2"/>
    <property type="match status" value="1"/>
</dbReference>
<dbReference type="PANTHER" id="PTHR30075">
    <property type="entry name" value="GLYCYL-TRNA SYNTHETASE"/>
    <property type="match status" value="1"/>
</dbReference>
<dbReference type="Pfam" id="PF05746">
    <property type="entry name" value="DALR_1"/>
    <property type="match status" value="1"/>
</dbReference>
<dbReference type="Pfam" id="PF02092">
    <property type="entry name" value="tRNA_synt_2f"/>
    <property type="match status" value="1"/>
</dbReference>
<dbReference type="PRINTS" id="PR01045">
    <property type="entry name" value="TRNASYNTHGB"/>
</dbReference>
<dbReference type="SUPFAM" id="SSF109604">
    <property type="entry name" value="HD-domain/PDEase-like"/>
    <property type="match status" value="1"/>
</dbReference>
<dbReference type="PROSITE" id="PS50861">
    <property type="entry name" value="AA_TRNA_LIGASE_II_GLYAB"/>
    <property type="match status" value="1"/>
</dbReference>
<comment type="catalytic activity">
    <reaction evidence="1">
        <text>tRNA(Gly) + glycine + ATP = glycyl-tRNA(Gly) + AMP + diphosphate</text>
        <dbReference type="Rhea" id="RHEA:16013"/>
        <dbReference type="Rhea" id="RHEA-COMP:9664"/>
        <dbReference type="Rhea" id="RHEA-COMP:9683"/>
        <dbReference type="ChEBI" id="CHEBI:30616"/>
        <dbReference type="ChEBI" id="CHEBI:33019"/>
        <dbReference type="ChEBI" id="CHEBI:57305"/>
        <dbReference type="ChEBI" id="CHEBI:78442"/>
        <dbReference type="ChEBI" id="CHEBI:78522"/>
        <dbReference type="ChEBI" id="CHEBI:456215"/>
        <dbReference type="EC" id="6.1.1.14"/>
    </reaction>
</comment>
<comment type="subunit">
    <text evidence="1">Tetramer of two alpha and two beta subunits.</text>
</comment>
<comment type="subcellular location">
    <subcellularLocation>
        <location evidence="1">Cytoplasm</location>
    </subcellularLocation>
</comment>
<comment type="similarity">
    <text evidence="1">Belongs to the class-II aminoacyl-tRNA synthetase family.</text>
</comment>
<evidence type="ECO:0000255" key="1">
    <source>
        <dbReference type="HAMAP-Rule" id="MF_00255"/>
    </source>
</evidence>
<proteinExistence type="inferred from homology"/>
<reference key="1">
    <citation type="journal article" date="2002" name="Science">
        <title>50 million years of genomic stasis in endosymbiotic bacteria.</title>
        <authorList>
            <person name="Tamas I."/>
            <person name="Klasson L."/>
            <person name="Canbaeck B."/>
            <person name="Naeslund A.K."/>
            <person name="Eriksson A.-S."/>
            <person name="Wernegreen J.J."/>
            <person name="Sandstroem J.P."/>
            <person name="Moran N.A."/>
            <person name="Andersson S.G.E."/>
        </authorList>
    </citation>
    <scope>NUCLEOTIDE SEQUENCE [LARGE SCALE GENOMIC DNA]</scope>
    <source>
        <strain>Sg</strain>
    </source>
</reference>
<sequence length="691" mass="81070">MIKKTFLVEIGTEELPSNILKKIILVFYKNFVDELSFNKILYKNINYFSTPRRLALQIIELDTSEKINEKIKKGPAIKHAFDENGNPTKAAYYWAKSCKINLNQAERLKTKTGEWIIHRIQEKKEKIELLFPKIIEKILKQINLKNTMRWETTNLRFIRPIRNIVMLLDEKIIKSEVFNVPSNNFLYHHISCKEEKIYIKNAIEYPAVLFKKNKIIANYETRKEKIKYEAKKIAKKVDGIIKTNPFLLEEVTSLVESPQALLARFKKDYINYIPKKILIHTIEKQQRCFSIYSNNSKKEILPYFIFISNIKSKKNKEIILGNEKVMHARLSDAMFFLKQDRKRKLENYLPFLKKVSFYNNLGTLYEKTLRLKLLIESISCYTNTINKNDLIRSAVLSKCDLITQMVDEFPELQGTIGMYYALENKENKEVAIAIKEQYLPSFSGDELPSTPIGCLLSISDKIDTLSGMFAIGETPTPEKDPFGLRRAALGILRIIITKKIPIDLKKIIEISLKIYTFKKVNYSIISKKIIKFFISRLSFFYEKKGYSTKVIKSVLSCKLTEPLDIDKRINAISDLKKIESIILIAKRIDNIVKNNHQIISSEIHVELMKKTEEKNLLKEIKIFNSKTKELFIQKKYKEILVEIKKLEKPIDNFFDKVQINHSNFEIRQNRLLLLIKIQKFFLKIANFSYLY</sequence>
<protein>
    <recommendedName>
        <fullName evidence="1">Glycine--tRNA ligase beta subunit</fullName>
        <ecNumber evidence="1">6.1.1.14</ecNumber>
    </recommendedName>
    <alternativeName>
        <fullName evidence="1">Glycyl-tRNA synthetase beta subunit</fullName>
        <shortName evidence="1">GlyRS</shortName>
    </alternativeName>
</protein>
<name>SYGB_BUCAP</name>
<keyword id="KW-0030">Aminoacyl-tRNA synthetase</keyword>
<keyword id="KW-0067">ATP-binding</keyword>
<keyword id="KW-0963">Cytoplasm</keyword>
<keyword id="KW-0436">Ligase</keyword>
<keyword id="KW-0547">Nucleotide-binding</keyword>
<keyword id="KW-0648">Protein biosynthesis</keyword>